<comment type="function">
    <text evidence="1">Part of a sulfur-relay system required for 2-thiolation of 5-methylaminomethyl-2-thiouridine (mnm(5)s(2)U) at tRNA wobble positions.</text>
</comment>
<comment type="subunit">
    <text evidence="1">Heterohexamer, formed by a dimer of trimers. The hexameric TusBCD complex contains 2 copies each of TusB, TusC and TusD. The TusBCD complex interacts with TusE.</text>
</comment>
<comment type="subcellular location">
    <subcellularLocation>
        <location evidence="1">Cytoplasm</location>
    </subcellularLocation>
</comment>
<comment type="similarity">
    <text evidence="1">Belongs to the DsrH/TusB family.</text>
</comment>
<name>TUSB_ECO7I</name>
<sequence length="95" mass="10692">MLHTLHRSPWLTDFAALLRLLSEGDELLLLQDGVTAAVDGNRYLESLRNAPIKVYALNEDLIARGLTGQISNDIIPIDYTDFVRLTVKHSSQMAW</sequence>
<accession>B7NLP8</accession>
<proteinExistence type="inferred from homology"/>
<evidence type="ECO:0000255" key="1">
    <source>
        <dbReference type="HAMAP-Rule" id="MF_01564"/>
    </source>
</evidence>
<organism>
    <name type="scientific">Escherichia coli O7:K1 (strain IAI39 / ExPEC)</name>
    <dbReference type="NCBI Taxonomy" id="585057"/>
    <lineage>
        <taxon>Bacteria</taxon>
        <taxon>Pseudomonadati</taxon>
        <taxon>Pseudomonadota</taxon>
        <taxon>Gammaproteobacteria</taxon>
        <taxon>Enterobacterales</taxon>
        <taxon>Enterobacteriaceae</taxon>
        <taxon>Escherichia</taxon>
    </lineage>
</organism>
<reference key="1">
    <citation type="journal article" date="2009" name="PLoS Genet.">
        <title>Organised genome dynamics in the Escherichia coli species results in highly diverse adaptive paths.</title>
        <authorList>
            <person name="Touchon M."/>
            <person name="Hoede C."/>
            <person name="Tenaillon O."/>
            <person name="Barbe V."/>
            <person name="Baeriswyl S."/>
            <person name="Bidet P."/>
            <person name="Bingen E."/>
            <person name="Bonacorsi S."/>
            <person name="Bouchier C."/>
            <person name="Bouvet O."/>
            <person name="Calteau A."/>
            <person name="Chiapello H."/>
            <person name="Clermont O."/>
            <person name="Cruveiller S."/>
            <person name="Danchin A."/>
            <person name="Diard M."/>
            <person name="Dossat C."/>
            <person name="Karoui M.E."/>
            <person name="Frapy E."/>
            <person name="Garry L."/>
            <person name="Ghigo J.M."/>
            <person name="Gilles A.M."/>
            <person name="Johnson J."/>
            <person name="Le Bouguenec C."/>
            <person name="Lescat M."/>
            <person name="Mangenot S."/>
            <person name="Martinez-Jehanne V."/>
            <person name="Matic I."/>
            <person name="Nassif X."/>
            <person name="Oztas S."/>
            <person name="Petit M.A."/>
            <person name="Pichon C."/>
            <person name="Rouy Z."/>
            <person name="Ruf C.S."/>
            <person name="Schneider D."/>
            <person name="Tourret J."/>
            <person name="Vacherie B."/>
            <person name="Vallenet D."/>
            <person name="Medigue C."/>
            <person name="Rocha E.P.C."/>
            <person name="Denamur E."/>
        </authorList>
    </citation>
    <scope>NUCLEOTIDE SEQUENCE [LARGE SCALE GENOMIC DNA]</scope>
    <source>
        <strain>IAI39 / ExPEC</strain>
    </source>
</reference>
<gene>
    <name evidence="1" type="primary">tusB</name>
    <name type="ordered locus">ECIAI39_3823</name>
</gene>
<dbReference type="EMBL" id="CU928164">
    <property type="protein sequence ID" value="CAR19937.1"/>
    <property type="molecule type" value="Genomic_DNA"/>
</dbReference>
<dbReference type="RefSeq" id="WP_000903377.1">
    <property type="nucleotide sequence ID" value="NC_011750.1"/>
</dbReference>
<dbReference type="RefSeq" id="YP_002409720.1">
    <property type="nucleotide sequence ID" value="NC_011750.1"/>
</dbReference>
<dbReference type="SMR" id="B7NLP8"/>
<dbReference type="STRING" id="585057.ECIAI39_3823"/>
<dbReference type="GeneID" id="75206286"/>
<dbReference type="KEGG" id="ect:ECIAI39_3823"/>
<dbReference type="PATRIC" id="fig|585057.6.peg.3960"/>
<dbReference type="HOGENOM" id="CLU_166087_2_1_6"/>
<dbReference type="Proteomes" id="UP000000749">
    <property type="component" value="Chromosome"/>
</dbReference>
<dbReference type="GO" id="GO:1990228">
    <property type="term" value="C:sulfurtransferase complex"/>
    <property type="evidence" value="ECO:0007669"/>
    <property type="project" value="TreeGrafter"/>
</dbReference>
<dbReference type="GO" id="GO:0002143">
    <property type="term" value="P:tRNA wobble position uridine thiolation"/>
    <property type="evidence" value="ECO:0007669"/>
    <property type="project" value="InterPro"/>
</dbReference>
<dbReference type="FunFam" id="3.40.1260.10:FF:000002">
    <property type="entry name" value="Sulfurtransferase TusB"/>
    <property type="match status" value="1"/>
</dbReference>
<dbReference type="Gene3D" id="3.40.1260.10">
    <property type="entry name" value="DsrEFH-like"/>
    <property type="match status" value="1"/>
</dbReference>
<dbReference type="HAMAP" id="MF_01564">
    <property type="entry name" value="Thiourid_synth_B"/>
    <property type="match status" value="1"/>
</dbReference>
<dbReference type="InterPro" id="IPR027396">
    <property type="entry name" value="DsrEFH-like"/>
</dbReference>
<dbReference type="InterPro" id="IPR023526">
    <property type="entry name" value="Sulphur_relay_TusB"/>
</dbReference>
<dbReference type="InterPro" id="IPR007215">
    <property type="entry name" value="Sulphur_relay_TusB/DsrH"/>
</dbReference>
<dbReference type="NCBIfam" id="NF010035">
    <property type="entry name" value="PRK13510.1"/>
    <property type="match status" value="1"/>
</dbReference>
<dbReference type="NCBIfam" id="TIGR03011">
    <property type="entry name" value="sulf_tusB_dsrH"/>
    <property type="match status" value="1"/>
</dbReference>
<dbReference type="PANTHER" id="PTHR37526">
    <property type="entry name" value="PROTEIN TUSB"/>
    <property type="match status" value="1"/>
</dbReference>
<dbReference type="PANTHER" id="PTHR37526:SF1">
    <property type="entry name" value="PROTEIN TUSB"/>
    <property type="match status" value="1"/>
</dbReference>
<dbReference type="Pfam" id="PF04077">
    <property type="entry name" value="DsrH"/>
    <property type="match status" value="1"/>
</dbReference>
<dbReference type="SUPFAM" id="SSF75169">
    <property type="entry name" value="DsrEFH-like"/>
    <property type="match status" value="1"/>
</dbReference>
<protein>
    <recommendedName>
        <fullName evidence="1">Protein TusB</fullName>
    </recommendedName>
    <alternativeName>
        <fullName evidence="1">tRNA 2-thiouridine synthesizing protein B</fullName>
    </alternativeName>
</protein>
<feature type="chain" id="PRO_1000147177" description="Protein TusB">
    <location>
        <begin position="1"/>
        <end position="95"/>
    </location>
</feature>
<keyword id="KW-0963">Cytoplasm</keyword>
<keyword id="KW-0819">tRNA processing</keyword>